<comment type="subunit">
    <text evidence="2 5">Interacts with NTH1 (via N-terminus when phosphorylated by PKA); the interaction is direct and activates NTH1 (PubMed:22320399). Interacts with FIN1 (PubMed:12551942).</text>
</comment>
<comment type="interaction">
    <interactant intactId="EBI-3672">
        <id>P34730</id>
    </interactant>
    <interactant intactId="EBI-3661">
        <id>P29311</id>
        <label>BMH1</label>
    </interactant>
    <organismsDiffer>false</organismsDiffer>
    <experiments>8</experiments>
</comment>
<comment type="interaction">
    <interactant intactId="EBI-3672">
        <id>P34730</id>
    </interactant>
    <interactant intactId="EBI-11407">
        <id>P33748</id>
        <label>MSN2</label>
    </interactant>
    <organismsDiffer>false</organismsDiffer>
    <experiments>2</experiments>
</comment>
<comment type="interaction">
    <interactant intactId="EBI-3672">
        <id>P34730</id>
    </interactant>
    <interactant intactId="EBI-19509">
        <id>P32356</id>
        <label>NTH1</label>
    </interactant>
    <organismsDiffer>false</organismsDiffer>
    <experiments>9</experiments>
</comment>
<comment type="interaction">
    <interactant intactId="EBI-3672">
        <id>P34730</id>
    </interactant>
    <interactant intactId="EBI-17843">
        <id>P22216</id>
        <label>RAD53</label>
    </interactant>
    <organismsDiffer>false</organismsDiffer>
    <experiments>2</experiments>
</comment>
<comment type="subcellular location">
    <subcellularLocation>
        <location evidence="3">Cytoplasm</location>
    </subcellularLocation>
    <subcellularLocation>
        <location evidence="3">Nucleus</location>
    </subcellularLocation>
</comment>
<comment type="miscellaneous">
    <text evidence="4">Present with 47600 molecules/cell in log phase SD medium.</text>
</comment>
<comment type="similarity">
    <text evidence="7">Belongs to the 14-3-3 family.</text>
</comment>
<proteinExistence type="evidence at protein level"/>
<organism>
    <name type="scientific">Saccharomyces cerevisiae (strain ATCC 204508 / S288c)</name>
    <name type="common">Baker's yeast</name>
    <dbReference type="NCBI Taxonomy" id="559292"/>
    <lineage>
        <taxon>Eukaryota</taxon>
        <taxon>Fungi</taxon>
        <taxon>Dikarya</taxon>
        <taxon>Ascomycota</taxon>
        <taxon>Saccharomycotina</taxon>
        <taxon>Saccharomycetes</taxon>
        <taxon>Saccharomycetales</taxon>
        <taxon>Saccharomycetaceae</taxon>
        <taxon>Saccharomyces</taxon>
    </lineage>
</organism>
<gene>
    <name type="primary">BMH2</name>
    <name type="ordered locus">YDR099W</name>
    <name type="ORF">YD8557.08</name>
</gene>
<sequence length="273" mass="31061">MSQTREDSVYLAKLAEQAERYEEMVENMKAVASSGQELSVEERNLLSVAYKNVIGARRASWRIVSSIEQKEESKEKSEHQVELIRSYRSKIETELTKISDDILSVLDSHLIPSATTGESKVFYYKMKGDYHRYLAEFSSGDAREKATNSSLEAYKTASEIATTELPPTHPIRLGLALNFSVFYYEIQNSPDKACHLAKQAFDDAIAELDTLSEESYKDSTLIMQLLRDNLTLWTSDISESGQEDQQQQQQQQQQQQQQQQQAPAEQTQGEPTK</sequence>
<name>BMH2_YEAST</name>
<reference key="1">
    <citation type="journal article" date="1995" name="Eur. J. Biochem.">
        <title>The 14-3-3 proteins encoded by the BMH1 and BMH2 genes are essential in the yeast Saccharomyces cerevisiae and can be replaced by a plant homologue.</title>
        <authorList>
            <person name="van Heusden G.P.H."/>
            <person name="Griffith D.J.F."/>
            <person name="Ford J.C."/>
            <person name="Chin-A-Woeng T.F.C."/>
            <person name="Schrader P.A.T."/>
            <person name="Carr A.M."/>
            <person name="Steensma H.Y."/>
        </authorList>
    </citation>
    <scope>NUCLEOTIDE SEQUENCE [GENOMIC DNA]</scope>
</reference>
<reference key="2">
    <citation type="journal article" date="1995" name="Proc. Natl. Acad. Sci. U.S.A.">
        <title>14-3-3 proteins: potential roles in vesicular transport and Ras signaling in Saccharomyces cerevisiae.</title>
        <authorList>
            <person name="Gelperin D."/>
            <person name="Weigle J."/>
            <person name="Nelson K.K."/>
            <person name="Roseboom P."/>
            <person name="Irie K."/>
            <person name="Matsumoto K."/>
            <person name="Lemmon S.K."/>
        </authorList>
    </citation>
    <scope>NUCLEOTIDE SEQUENCE [GENOMIC DNA]</scope>
</reference>
<reference key="3">
    <citation type="journal article" date="1997" name="Nature">
        <title>The nucleotide sequence of Saccharomyces cerevisiae chromosome IV.</title>
        <authorList>
            <person name="Jacq C."/>
            <person name="Alt-Moerbe J."/>
            <person name="Andre B."/>
            <person name="Arnold W."/>
            <person name="Bahr A."/>
            <person name="Ballesta J.P.G."/>
            <person name="Bargues M."/>
            <person name="Baron L."/>
            <person name="Becker A."/>
            <person name="Biteau N."/>
            <person name="Bloecker H."/>
            <person name="Blugeon C."/>
            <person name="Boskovic J."/>
            <person name="Brandt P."/>
            <person name="Brueckner M."/>
            <person name="Buitrago M.J."/>
            <person name="Coster F."/>
            <person name="Delaveau T."/>
            <person name="del Rey F."/>
            <person name="Dujon B."/>
            <person name="Eide L.G."/>
            <person name="Garcia-Cantalejo J.M."/>
            <person name="Goffeau A."/>
            <person name="Gomez-Peris A."/>
            <person name="Granotier C."/>
            <person name="Hanemann V."/>
            <person name="Hankeln T."/>
            <person name="Hoheisel J.D."/>
            <person name="Jaeger W."/>
            <person name="Jimenez A."/>
            <person name="Jonniaux J.-L."/>
            <person name="Kraemer C."/>
            <person name="Kuester H."/>
            <person name="Laamanen P."/>
            <person name="Legros Y."/>
            <person name="Louis E.J."/>
            <person name="Moeller-Rieker S."/>
            <person name="Monnet A."/>
            <person name="Moro M."/>
            <person name="Mueller-Auer S."/>
            <person name="Nussbaumer B."/>
            <person name="Paricio N."/>
            <person name="Paulin L."/>
            <person name="Perea J."/>
            <person name="Perez-Alonso M."/>
            <person name="Perez-Ortin J.E."/>
            <person name="Pohl T.M."/>
            <person name="Prydz H."/>
            <person name="Purnelle B."/>
            <person name="Rasmussen S.W."/>
            <person name="Remacha M.A."/>
            <person name="Revuelta J.L."/>
            <person name="Rieger M."/>
            <person name="Salom D."/>
            <person name="Saluz H.P."/>
            <person name="Saiz J.E."/>
            <person name="Saren A.-M."/>
            <person name="Schaefer M."/>
            <person name="Scharfe M."/>
            <person name="Schmidt E.R."/>
            <person name="Schneider C."/>
            <person name="Scholler P."/>
            <person name="Schwarz S."/>
            <person name="Soler-Mira A."/>
            <person name="Urrestarazu L.A."/>
            <person name="Verhasselt P."/>
            <person name="Vissers S."/>
            <person name="Voet M."/>
            <person name="Volckaert G."/>
            <person name="Wagner G."/>
            <person name="Wambutt R."/>
            <person name="Wedler E."/>
            <person name="Wedler H."/>
            <person name="Woelfl S."/>
            <person name="Harris D.E."/>
            <person name="Bowman S."/>
            <person name="Brown D."/>
            <person name="Churcher C.M."/>
            <person name="Connor R."/>
            <person name="Dedman K."/>
            <person name="Gentles S."/>
            <person name="Hamlin N."/>
            <person name="Hunt S."/>
            <person name="Jones L."/>
            <person name="McDonald S."/>
            <person name="Murphy L.D."/>
            <person name="Niblett D."/>
            <person name="Odell C."/>
            <person name="Oliver K."/>
            <person name="Rajandream M.A."/>
            <person name="Richards C."/>
            <person name="Shore L."/>
            <person name="Walsh S.V."/>
            <person name="Barrell B.G."/>
            <person name="Dietrich F.S."/>
            <person name="Mulligan J.T."/>
            <person name="Allen E."/>
            <person name="Araujo R."/>
            <person name="Aviles E."/>
            <person name="Berno A."/>
            <person name="Carpenter J."/>
            <person name="Chen E."/>
            <person name="Cherry J.M."/>
            <person name="Chung E."/>
            <person name="Duncan M."/>
            <person name="Hunicke-Smith S."/>
            <person name="Hyman R.W."/>
            <person name="Komp C."/>
            <person name="Lashkari D."/>
            <person name="Lew H."/>
            <person name="Lin D."/>
            <person name="Mosedale D."/>
            <person name="Nakahara K."/>
            <person name="Namath A."/>
            <person name="Oefner P."/>
            <person name="Oh C."/>
            <person name="Petel F.X."/>
            <person name="Roberts D."/>
            <person name="Schramm S."/>
            <person name="Schroeder M."/>
            <person name="Shogren T."/>
            <person name="Shroff N."/>
            <person name="Winant A."/>
            <person name="Yelton M.A."/>
            <person name="Botstein D."/>
            <person name="Davis R.W."/>
            <person name="Johnston M."/>
            <person name="Andrews S."/>
            <person name="Brinkman R."/>
            <person name="Cooper J."/>
            <person name="Ding H."/>
            <person name="Du Z."/>
            <person name="Favello A."/>
            <person name="Fulton L."/>
            <person name="Gattung S."/>
            <person name="Greco T."/>
            <person name="Hallsworth K."/>
            <person name="Hawkins J."/>
            <person name="Hillier L.W."/>
            <person name="Jier M."/>
            <person name="Johnson D."/>
            <person name="Johnston L."/>
            <person name="Kirsten J."/>
            <person name="Kucaba T."/>
            <person name="Langston Y."/>
            <person name="Latreille P."/>
            <person name="Le T."/>
            <person name="Mardis E."/>
            <person name="Menezes S."/>
            <person name="Miller N."/>
            <person name="Nhan M."/>
            <person name="Pauley A."/>
            <person name="Peluso D."/>
            <person name="Rifkin L."/>
            <person name="Riles L."/>
            <person name="Taich A."/>
            <person name="Trevaskis E."/>
            <person name="Vignati D."/>
            <person name="Wilcox L."/>
            <person name="Wohldman P."/>
            <person name="Vaudin M."/>
            <person name="Wilson R."/>
            <person name="Waterston R."/>
            <person name="Albermann K."/>
            <person name="Hani J."/>
            <person name="Heumann K."/>
            <person name="Kleine K."/>
            <person name="Mewes H.-W."/>
            <person name="Zollner A."/>
            <person name="Zaccaria P."/>
        </authorList>
    </citation>
    <scope>NUCLEOTIDE SEQUENCE [LARGE SCALE GENOMIC DNA]</scope>
    <source>
        <strain>ATCC 204508 / S288c</strain>
    </source>
</reference>
<reference key="4">
    <citation type="journal article" date="2014" name="G3 (Bethesda)">
        <title>The reference genome sequence of Saccharomyces cerevisiae: Then and now.</title>
        <authorList>
            <person name="Engel S.R."/>
            <person name="Dietrich F.S."/>
            <person name="Fisk D.G."/>
            <person name="Binkley G."/>
            <person name="Balakrishnan R."/>
            <person name="Costanzo M.C."/>
            <person name="Dwight S.S."/>
            <person name="Hitz B.C."/>
            <person name="Karra K."/>
            <person name="Nash R.S."/>
            <person name="Weng S."/>
            <person name="Wong E.D."/>
            <person name="Lloyd P."/>
            <person name="Skrzypek M.S."/>
            <person name="Miyasato S.R."/>
            <person name="Simison M."/>
            <person name="Cherry J.M."/>
        </authorList>
    </citation>
    <scope>GENOME REANNOTATION</scope>
    <source>
        <strain>ATCC 204508 / S288c</strain>
    </source>
</reference>
<reference key="5">
    <citation type="journal article" date="2007" name="Genome Res.">
        <title>Genome-wide identification of spliced introns using a tiling microarray.</title>
        <authorList>
            <person name="Zhang Z."/>
            <person name="Hesselberth J.R."/>
            <person name="Fields S."/>
        </authorList>
    </citation>
    <scope>NUCLEOTIDE SEQUENCE [MRNA] OF 1-143</scope>
    <source>
        <strain>ATCC 201390 / BY4743</strain>
    </source>
</reference>
<reference key="6">
    <citation type="journal article" date="2007" name="Proc. Natl. Acad. Sci. U.S.A.">
        <title>High-density yeast-tiling array reveals previously undiscovered introns and extensive regulation of meiotic splicing.</title>
        <authorList>
            <person name="Juneau K."/>
            <person name="Palm C."/>
            <person name="Miranda M."/>
            <person name="Davis R.W."/>
        </authorList>
    </citation>
    <scope>NUCLEOTIDE SEQUENCE [MRNA] OF 1-116</scope>
    <source>
        <strain>ATCC 201390 / BY4743</strain>
    </source>
</reference>
<reference key="7">
    <citation type="journal article" date="1997" name="Electrophoresis">
        <title>Proteome studies of Saccharomyces cerevisiae: identification and characterization of abundant proteins.</title>
        <authorList>
            <person name="Garrels J.I."/>
            <person name="McLaughlin C.S."/>
            <person name="Warner J.R."/>
            <person name="Futcher B."/>
            <person name="Latter G.I."/>
            <person name="Kobayashi R."/>
            <person name="Schwender B."/>
            <person name="Volpe T."/>
            <person name="Anderson D.S."/>
            <person name="Mesquita-Fuentes R."/>
            <person name="Payne W.E."/>
        </authorList>
    </citation>
    <scope>ACETYLATION AT SER-2</scope>
</reference>
<reference key="8">
    <citation type="journal article" date="2003" name="J. Biol. Chem.">
        <title>Self-association of the spindle pole body-related intermediate filament protein Fin1p and its phosphorylation-dependent interaction with 14-3-3 proteins in yeast.</title>
        <authorList>
            <person name="van Hemert M.J."/>
            <person name="Deelder A.M."/>
            <person name="Molenaar C."/>
            <person name="Steensma H.Y."/>
            <person name="van Heusden G.P.H."/>
        </authorList>
    </citation>
    <scope>INTERACTION WITH FIN1</scope>
</reference>
<reference key="9">
    <citation type="journal article" date="2003" name="Nature">
        <title>Global analysis of protein localization in budding yeast.</title>
        <authorList>
            <person name="Huh W.-K."/>
            <person name="Falvo J.V."/>
            <person name="Gerke L.C."/>
            <person name="Carroll A.S."/>
            <person name="Howson R.W."/>
            <person name="Weissman J.S."/>
            <person name="O'Shea E.K."/>
        </authorList>
    </citation>
    <scope>SUBCELLULAR LOCATION [LARGE SCALE ANALYSIS]</scope>
</reference>
<reference key="10">
    <citation type="journal article" date="2003" name="Nature">
        <title>Global analysis of protein expression in yeast.</title>
        <authorList>
            <person name="Ghaemmaghami S."/>
            <person name="Huh W.-K."/>
            <person name="Bower K."/>
            <person name="Howson R.W."/>
            <person name="Belle A."/>
            <person name="Dephoure N."/>
            <person name="O'Shea E.K."/>
            <person name="Weissman J.S."/>
        </authorList>
    </citation>
    <scope>LEVEL OF PROTEIN EXPRESSION [LARGE SCALE ANALYSIS]</scope>
</reference>
<reference key="11">
    <citation type="journal article" date="2012" name="Biochem. J.">
        <title>Role of individual phosphorylation sites for the 14-3-3-protein-dependent activation of yeast neutral trehalase Nth1.</title>
        <authorList>
            <person name="Veisova D."/>
            <person name="Macakova E."/>
            <person name="Rezabkova L."/>
            <person name="Sulc M."/>
            <person name="Vacha P."/>
            <person name="Sychrova H."/>
            <person name="Obsil T."/>
            <person name="Obsilova V."/>
        </authorList>
    </citation>
    <scope>INTERACTION WITH NTH1</scope>
</reference>
<accession>P34730</accession>
<accession>A2TBP2</accession>
<accession>D6VS86</accession>
<accession>Q06HN5</accession>
<dbReference type="EMBL" id="X84817">
    <property type="protein sequence ID" value="CAA59275.1"/>
    <property type="molecule type" value="Genomic_DNA"/>
</dbReference>
<dbReference type="EMBL" id="U01883">
    <property type="protein sequence ID" value="AAA03336.1"/>
    <property type="molecule type" value="Unassigned_DNA"/>
</dbReference>
<dbReference type="EMBL" id="Z47746">
    <property type="protein sequence ID" value="CAA87675.1"/>
    <property type="molecule type" value="Genomic_DNA"/>
</dbReference>
<dbReference type="EMBL" id="DQ881448">
    <property type="protein sequence ID" value="ABI95875.1"/>
    <property type="molecule type" value="mRNA"/>
</dbReference>
<dbReference type="EMBL" id="EF123145">
    <property type="protein sequence ID" value="ABM97489.1"/>
    <property type="molecule type" value="mRNA"/>
</dbReference>
<dbReference type="EMBL" id="BK006938">
    <property type="protein sequence ID" value="DAA11946.1"/>
    <property type="molecule type" value="Genomic_DNA"/>
</dbReference>
<dbReference type="PIR" id="S51250">
    <property type="entry name" value="S51250"/>
</dbReference>
<dbReference type="RefSeq" id="NP_010384.3">
    <property type="nucleotide sequence ID" value="NM_001180407.3"/>
</dbReference>
<dbReference type="SMR" id="P34730"/>
<dbReference type="BioGRID" id="32157">
    <property type="interactions" value="518"/>
</dbReference>
<dbReference type="DIP" id="DIP-1212N"/>
<dbReference type="FunCoup" id="P34730">
    <property type="interactions" value="1625"/>
</dbReference>
<dbReference type="IntAct" id="P34730">
    <property type="interactions" value="144"/>
</dbReference>
<dbReference type="MINT" id="P34730"/>
<dbReference type="STRING" id="4932.YDR099W"/>
<dbReference type="iPTMnet" id="P34730"/>
<dbReference type="PaxDb" id="4932-YDR099W"/>
<dbReference type="PeptideAtlas" id="P34730"/>
<dbReference type="TopDownProteomics" id="P34730"/>
<dbReference type="EnsemblFungi" id="YDR099W_mRNA">
    <property type="protein sequence ID" value="YDR099W"/>
    <property type="gene ID" value="YDR099W"/>
</dbReference>
<dbReference type="GeneID" id="851676"/>
<dbReference type="KEGG" id="sce:YDR099W"/>
<dbReference type="AGR" id="SGD:S000002506"/>
<dbReference type="SGD" id="S000002506">
    <property type="gene designation" value="BMH2"/>
</dbReference>
<dbReference type="VEuPathDB" id="FungiDB:YDR099W"/>
<dbReference type="eggNOG" id="KOG0841">
    <property type="taxonomic scope" value="Eukaryota"/>
</dbReference>
<dbReference type="GeneTree" id="ENSGT01110000267238"/>
<dbReference type="HOGENOM" id="CLU_058290_0_0_1"/>
<dbReference type="InParanoid" id="P34730"/>
<dbReference type="OMA" id="KGCQLAR"/>
<dbReference type="OrthoDB" id="10260625at2759"/>
<dbReference type="BioCyc" id="YEAST:G3O-29702-MONOMER"/>
<dbReference type="Reactome" id="R-SCE-3371453">
    <property type="pathway name" value="Regulation of HSF1-mediated heat shock response"/>
</dbReference>
<dbReference type="Reactome" id="R-SCE-3371511">
    <property type="pathway name" value="HSF1 activation"/>
</dbReference>
<dbReference type="Reactome" id="R-SCE-5625740">
    <property type="pathway name" value="RHO GTPases activate PKNs"/>
</dbReference>
<dbReference type="Reactome" id="R-SCE-75035">
    <property type="pathway name" value="Chk1/Chk2(Cds1) mediated inactivation of Cyclin B:Cdk1 complex"/>
</dbReference>
<dbReference type="BioGRID-ORCS" id="851676">
    <property type="hits" value="0 hits in 10 CRISPR screens"/>
</dbReference>
<dbReference type="PRO" id="PR:P34730"/>
<dbReference type="Proteomes" id="UP000002311">
    <property type="component" value="Chromosome IV"/>
</dbReference>
<dbReference type="RNAct" id="P34730">
    <property type="molecule type" value="protein"/>
</dbReference>
<dbReference type="GO" id="GO:0005737">
    <property type="term" value="C:cytoplasm"/>
    <property type="evidence" value="ECO:0000314"/>
    <property type="project" value="SGD"/>
</dbReference>
<dbReference type="GO" id="GO:0005634">
    <property type="term" value="C:nucleus"/>
    <property type="evidence" value="ECO:0000314"/>
    <property type="project" value="SGD"/>
</dbReference>
<dbReference type="GO" id="GO:0005886">
    <property type="term" value="C:plasma membrane"/>
    <property type="evidence" value="ECO:0007005"/>
    <property type="project" value="SGD"/>
</dbReference>
<dbReference type="GO" id="GO:0003688">
    <property type="term" value="F:DNA replication origin binding"/>
    <property type="evidence" value="ECO:0000314"/>
    <property type="project" value="SGD"/>
</dbReference>
<dbReference type="GO" id="GO:0050815">
    <property type="term" value="F:phosphoserine residue binding"/>
    <property type="evidence" value="ECO:0000315"/>
    <property type="project" value="SGD"/>
</dbReference>
<dbReference type="GO" id="GO:0030437">
    <property type="term" value="P:ascospore formation"/>
    <property type="evidence" value="ECO:0000316"/>
    <property type="project" value="SGD"/>
</dbReference>
<dbReference type="GO" id="GO:0006031">
    <property type="term" value="P:chitin biosynthetic process"/>
    <property type="evidence" value="ECO:0000316"/>
    <property type="project" value="SGD"/>
</dbReference>
<dbReference type="GO" id="GO:0000077">
    <property type="term" value="P:DNA damage checkpoint signaling"/>
    <property type="evidence" value="ECO:0000315"/>
    <property type="project" value="SGD"/>
</dbReference>
<dbReference type="GO" id="GO:0006270">
    <property type="term" value="P:DNA replication initiation"/>
    <property type="evidence" value="ECO:0000316"/>
    <property type="project" value="SGD"/>
</dbReference>
<dbReference type="GO" id="GO:0000278">
    <property type="term" value="P:mitotic cell cycle"/>
    <property type="evidence" value="ECO:0000353"/>
    <property type="project" value="SGD"/>
</dbReference>
<dbReference type="GO" id="GO:0043066">
    <property type="term" value="P:negative regulation of apoptotic process"/>
    <property type="evidence" value="ECO:0000315"/>
    <property type="project" value="SGD"/>
</dbReference>
<dbReference type="GO" id="GO:0031397">
    <property type="term" value="P:negative regulation of protein ubiquitination"/>
    <property type="evidence" value="ECO:0000353"/>
    <property type="project" value="SGD"/>
</dbReference>
<dbReference type="GO" id="GO:0006267">
    <property type="term" value="P:pre-replicative complex assembly involved in nuclear cell cycle DNA replication"/>
    <property type="evidence" value="ECO:0000316"/>
    <property type="project" value="SGD"/>
</dbReference>
<dbReference type="GO" id="GO:0008104">
    <property type="term" value="P:protein localization"/>
    <property type="evidence" value="ECO:0000318"/>
    <property type="project" value="GO_Central"/>
</dbReference>
<dbReference type="GO" id="GO:0007124">
    <property type="term" value="P:pseudohyphal growth"/>
    <property type="evidence" value="ECO:0000316"/>
    <property type="project" value="SGD"/>
</dbReference>
<dbReference type="GO" id="GO:0007265">
    <property type="term" value="P:Ras protein signal transduction"/>
    <property type="evidence" value="ECO:0000316"/>
    <property type="project" value="SGD"/>
</dbReference>
<dbReference type="GO" id="GO:0070873">
    <property type="term" value="P:regulation of glycogen metabolic process"/>
    <property type="evidence" value="ECO:0000316"/>
    <property type="project" value="SGD"/>
</dbReference>
<dbReference type="GO" id="GO:0007165">
    <property type="term" value="P:signal transduction"/>
    <property type="evidence" value="ECO:0000318"/>
    <property type="project" value="GO_Central"/>
</dbReference>
<dbReference type="GO" id="GO:0001402">
    <property type="term" value="P:signal transduction involved in filamentous growth"/>
    <property type="evidence" value="ECO:0000316"/>
    <property type="project" value="SGD"/>
</dbReference>
<dbReference type="CDD" id="cd11309">
    <property type="entry name" value="14-3-3_fungi"/>
    <property type="match status" value="1"/>
</dbReference>
<dbReference type="FunFam" id="1.20.190.20:FF:000002">
    <property type="entry name" value="14-3-3 protein epsilon"/>
    <property type="match status" value="1"/>
</dbReference>
<dbReference type="Gene3D" id="1.20.190.20">
    <property type="entry name" value="14-3-3 domain"/>
    <property type="match status" value="1"/>
</dbReference>
<dbReference type="InterPro" id="IPR000308">
    <property type="entry name" value="14-3-3"/>
</dbReference>
<dbReference type="InterPro" id="IPR023409">
    <property type="entry name" value="14-3-3_CS"/>
</dbReference>
<dbReference type="InterPro" id="IPR036815">
    <property type="entry name" value="14-3-3_dom_sf"/>
</dbReference>
<dbReference type="InterPro" id="IPR023410">
    <property type="entry name" value="14-3-3_domain"/>
</dbReference>
<dbReference type="PANTHER" id="PTHR18860">
    <property type="entry name" value="14-3-3 PROTEIN"/>
    <property type="match status" value="1"/>
</dbReference>
<dbReference type="Pfam" id="PF00244">
    <property type="entry name" value="14-3-3"/>
    <property type="match status" value="1"/>
</dbReference>
<dbReference type="PIRSF" id="PIRSF000868">
    <property type="entry name" value="14-3-3"/>
    <property type="match status" value="1"/>
</dbReference>
<dbReference type="PRINTS" id="PR00305">
    <property type="entry name" value="1433ZETA"/>
</dbReference>
<dbReference type="SMART" id="SM00101">
    <property type="entry name" value="14_3_3"/>
    <property type="match status" value="1"/>
</dbReference>
<dbReference type="SUPFAM" id="SSF48445">
    <property type="entry name" value="14-3-3 protein"/>
    <property type="match status" value="1"/>
</dbReference>
<dbReference type="PROSITE" id="PS00796">
    <property type="entry name" value="1433_1"/>
    <property type="match status" value="1"/>
</dbReference>
<dbReference type="PROSITE" id="PS00797">
    <property type="entry name" value="1433_2"/>
    <property type="match status" value="1"/>
</dbReference>
<evidence type="ECO:0000256" key="1">
    <source>
        <dbReference type="SAM" id="MobiDB-lite"/>
    </source>
</evidence>
<evidence type="ECO:0000269" key="2">
    <source>
    </source>
</evidence>
<evidence type="ECO:0000269" key="3">
    <source>
    </source>
</evidence>
<evidence type="ECO:0000269" key="4">
    <source>
    </source>
</evidence>
<evidence type="ECO:0000269" key="5">
    <source>
    </source>
</evidence>
<evidence type="ECO:0000269" key="6">
    <source>
    </source>
</evidence>
<evidence type="ECO:0000305" key="7"/>
<keyword id="KW-0007">Acetylation</keyword>
<keyword id="KW-0963">Cytoplasm</keyword>
<keyword id="KW-0539">Nucleus</keyword>
<keyword id="KW-1185">Reference proteome</keyword>
<protein>
    <recommendedName>
        <fullName>Protein BMH2</fullName>
    </recommendedName>
</protein>
<feature type="initiator methionine" description="Removed" evidence="6">
    <location>
        <position position="1"/>
    </location>
</feature>
<feature type="chain" id="PRO_0000058716" description="Protein BMH2">
    <location>
        <begin position="2"/>
        <end position="273"/>
    </location>
</feature>
<feature type="region of interest" description="Disordered" evidence="1">
    <location>
        <begin position="236"/>
        <end position="273"/>
    </location>
</feature>
<feature type="compositionally biased region" description="Low complexity" evidence="1">
    <location>
        <begin position="245"/>
        <end position="261"/>
    </location>
</feature>
<feature type="compositionally biased region" description="Polar residues" evidence="1">
    <location>
        <begin position="262"/>
        <end position="273"/>
    </location>
</feature>
<feature type="modified residue" description="N-acetylserine" evidence="6">
    <location>
        <position position="2"/>
    </location>
</feature>
<feature type="sequence conflict" description="In Ref. 1; CAA59275." evidence="7" ref="1">
    <original>S</original>
    <variation>C</variation>
    <location>
        <position position="119"/>
    </location>
</feature>
<feature type="sequence conflict" description="In Ref. 1; CAA59275." evidence="7" ref="1">
    <original>G</original>
    <variation>F</variation>
    <location>
        <position position="174"/>
    </location>
</feature>